<keyword id="KW-0574">Periplasm</keyword>
<keyword id="KW-0732">Signal</keyword>
<keyword id="KW-0813">Transport</keyword>
<proteinExistence type="inferred from homology"/>
<accession>Q57RB1</accession>
<reference key="1">
    <citation type="journal article" date="2005" name="Nucleic Acids Res.">
        <title>The genome sequence of Salmonella enterica serovar Choleraesuis, a highly invasive and resistant zoonotic pathogen.</title>
        <authorList>
            <person name="Chiu C.-H."/>
            <person name="Tang P."/>
            <person name="Chu C."/>
            <person name="Hu S."/>
            <person name="Bao Q."/>
            <person name="Yu J."/>
            <person name="Chou Y.-Y."/>
            <person name="Wang H.-S."/>
            <person name="Lee Y.-S."/>
        </authorList>
    </citation>
    <scope>NUCLEOTIDE SEQUENCE [LARGE SCALE GENOMIC DNA]</scope>
    <source>
        <strain>SC-B67</strain>
    </source>
</reference>
<dbReference type="EMBL" id="AE017220">
    <property type="protein sequence ID" value="AAX64750.1"/>
    <property type="molecule type" value="Genomic_DNA"/>
</dbReference>
<dbReference type="RefSeq" id="WP_000191437.1">
    <property type="nucleotide sequence ID" value="NC_006905.1"/>
</dbReference>
<dbReference type="SMR" id="Q57RB1"/>
<dbReference type="KEGG" id="sec:SCH_0844"/>
<dbReference type="HOGENOM" id="CLU_017028_7_3_6"/>
<dbReference type="Proteomes" id="UP000000538">
    <property type="component" value="Chromosome"/>
</dbReference>
<dbReference type="GO" id="GO:0043190">
    <property type="term" value="C:ATP-binding cassette (ABC) transporter complex"/>
    <property type="evidence" value="ECO:0007669"/>
    <property type="project" value="InterPro"/>
</dbReference>
<dbReference type="GO" id="GO:0030288">
    <property type="term" value="C:outer membrane-bounded periplasmic space"/>
    <property type="evidence" value="ECO:0007669"/>
    <property type="project" value="TreeGrafter"/>
</dbReference>
<dbReference type="GO" id="GO:1904680">
    <property type="term" value="F:peptide transmembrane transporter activity"/>
    <property type="evidence" value="ECO:0007669"/>
    <property type="project" value="TreeGrafter"/>
</dbReference>
<dbReference type="GO" id="GO:0042938">
    <property type="term" value="P:dipeptide transport"/>
    <property type="evidence" value="ECO:0007669"/>
    <property type="project" value="TreeGrafter"/>
</dbReference>
<dbReference type="CDD" id="cd08499">
    <property type="entry name" value="PBP2_Ylib_like"/>
    <property type="match status" value="1"/>
</dbReference>
<dbReference type="FunFam" id="3.10.105.10:FF:000003">
    <property type="entry name" value="Glutathione ABC transporter substrate-binding protein GsiB"/>
    <property type="match status" value="1"/>
</dbReference>
<dbReference type="FunFam" id="3.40.190.10:FF:000094">
    <property type="entry name" value="Glutathione ABC transporter substrate-binding protein GsiB"/>
    <property type="match status" value="1"/>
</dbReference>
<dbReference type="FunFam" id="3.90.76.10:FF:000003">
    <property type="entry name" value="Glutathione ABC transporter substrate-binding protein GsiB"/>
    <property type="match status" value="1"/>
</dbReference>
<dbReference type="Gene3D" id="3.90.76.10">
    <property type="entry name" value="Dipeptide-binding Protein, Domain 1"/>
    <property type="match status" value="1"/>
</dbReference>
<dbReference type="Gene3D" id="3.10.105.10">
    <property type="entry name" value="Dipeptide-binding Protein, Domain 3"/>
    <property type="match status" value="1"/>
</dbReference>
<dbReference type="Gene3D" id="3.40.190.10">
    <property type="entry name" value="Periplasmic binding protein-like II"/>
    <property type="match status" value="1"/>
</dbReference>
<dbReference type="InterPro" id="IPR030678">
    <property type="entry name" value="Peptide/Ni-bd"/>
</dbReference>
<dbReference type="InterPro" id="IPR039424">
    <property type="entry name" value="SBP_5"/>
</dbReference>
<dbReference type="InterPro" id="IPR023765">
    <property type="entry name" value="SBP_5_CS"/>
</dbReference>
<dbReference type="InterPro" id="IPR000914">
    <property type="entry name" value="SBP_5_dom"/>
</dbReference>
<dbReference type="NCBIfam" id="NF011942">
    <property type="entry name" value="PRK15413.1"/>
    <property type="match status" value="1"/>
</dbReference>
<dbReference type="PANTHER" id="PTHR30290:SF32">
    <property type="entry name" value="GLUTATHIONE-BINDING PROTEIN GSIB"/>
    <property type="match status" value="1"/>
</dbReference>
<dbReference type="PANTHER" id="PTHR30290">
    <property type="entry name" value="PERIPLASMIC BINDING COMPONENT OF ABC TRANSPORTER"/>
    <property type="match status" value="1"/>
</dbReference>
<dbReference type="Pfam" id="PF00496">
    <property type="entry name" value="SBP_bac_5"/>
    <property type="match status" value="1"/>
</dbReference>
<dbReference type="PIRSF" id="PIRSF002741">
    <property type="entry name" value="MppA"/>
    <property type="match status" value="1"/>
</dbReference>
<dbReference type="SUPFAM" id="SSF53850">
    <property type="entry name" value="Periplasmic binding protein-like II"/>
    <property type="match status" value="1"/>
</dbReference>
<dbReference type="PROSITE" id="PS01040">
    <property type="entry name" value="SBP_BACTERIAL_5"/>
    <property type="match status" value="1"/>
</dbReference>
<sequence length="512" mass="56580">MTQFITHKWLAALGLASSIAAFPALAAKDVVVAVGSNFTTLDPYDANDTLSQAVAKSFYQGLFGLDKDMKVKNVLAEGYTVSDDGLTYTITLRRGVKFQDGADFNAAAVKANLDRASNPDNHLKRYNLYKNIAKTEVVDPATVKITLKQPFSAFINILAHPATAMISPQALEKYGKDIGFHPVGTGPYQLETWNQTDFVKVKKFAGYWQQGLPKLDSITWRPVTDNNTRAAMLQTGEAQFAFPIPYEQAALLAKNKNLELVASPSIMQRYISMNVTQKPFDNPKVREALNYAINRQALVKVAFAGYATPATGVVPPSIAYAQSYQPWPYDPAKARELLKEAGYPDGFSTTLWSSHNHSTAQKVLQFTQQQLAQIGIKARITAMDAGQRAAEVEGKGQKESGVRMFYTGWSASTGEADWALSPLFASQNWPPTQFNTAFYSNKQVDSDLAAALKTNDPQEKTRLYKEAQDIIWKESPWIPLVVEKLVSAHSKNLTGFWIMPDTGFSFDDADLK</sequence>
<comment type="function">
    <text evidence="1">Part of the ABC transporter complex GsiABCD involved in glutathione import. Binds glutathione.</text>
</comment>
<comment type="subunit">
    <text evidence="1">The complex is composed of two ATP-binding proteins (GsiA), two transmembrane proteins (GsiC and GsiD) and a solute-binding protein (GsiB).</text>
</comment>
<comment type="subcellular location">
    <subcellularLocation>
        <location evidence="1">Periplasm</location>
    </subcellularLocation>
</comment>
<comment type="similarity">
    <text evidence="3">Belongs to the bacterial solute-binding protein 5 family.</text>
</comment>
<organism>
    <name type="scientific">Salmonella choleraesuis (strain SC-B67)</name>
    <dbReference type="NCBI Taxonomy" id="321314"/>
    <lineage>
        <taxon>Bacteria</taxon>
        <taxon>Pseudomonadati</taxon>
        <taxon>Pseudomonadota</taxon>
        <taxon>Gammaproteobacteria</taxon>
        <taxon>Enterobacterales</taxon>
        <taxon>Enterobacteriaceae</taxon>
        <taxon>Salmonella</taxon>
    </lineage>
</organism>
<name>GSIB_SALCH</name>
<gene>
    <name evidence="1" type="primary">gsiB</name>
    <name type="ordered locus">SCH_0844</name>
</gene>
<evidence type="ECO:0000250" key="1">
    <source>
        <dbReference type="UniProtKB" id="P75797"/>
    </source>
</evidence>
<evidence type="ECO:0000255" key="2"/>
<evidence type="ECO:0000305" key="3"/>
<protein>
    <recommendedName>
        <fullName evidence="1">Glutathione-binding protein GsiB</fullName>
    </recommendedName>
</protein>
<feature type="signal peptide" evidence="2">
    <location>
        <begin position="1"/>
        <end position="26"/>
    </location>
</feature>
<feature type="chain" id="PRO_0000279978" description="Glutathione-binding protein GsiB">
    <location>
        <begin position="27"/>
        <end position="512"/>
    </location>
</feature>